<evidence type="ECO:0000255" key="1">
    <source>
        <dbReference type="HAMAP-Rule" id="MF_01039"/>
    </source>
</evidence>
<organism>
    <name type="scientific">Nitrobacter winogradskyi (strain ATCC 25391 / DSM 10237 / CIP 104748 / NCIMB 11846 / Nb-255)</name>
    <dbReference type="NCBI Taxonomy" id="323098"/>
    <lineage>
        <taxon>Bacteria</taxon>
        <taxon>Pseudomonadati</taxon>
        <taxon>Pseudomonadota</taxon>
        <taxon>Alphaproteobacteria</taxon>
        <taxon>Hyphomicrobiales</taxon>
        <taxon>Nitrobacteraceae</taxon>
        <taxon>Nitrobacter</taxon>
    </lineage>
</organism>
<name>GPMA_NITWN</name>
<proteinExistence type="inferred from homology"/>
<comment type="function">
    <text evidence="1">Catalyzes the interconversion of 2-phosphoglycerate and 3-phosphoglycerate.</text>
</comment>
<comment type="catalytic activity">
    <reaction evidence="1">
        <text>(2R)-2-phosphoglycerate = (2R)-3-phosphoglycerate</text>
        <dbReference type="Rhea" id="RHEA:15901"/>
        <dbReference type="ChEBI" id="CHEBI:58272"/>
        <dbReference type="ChEBI" id="CHEBI:58289"/>
        <dbReference type="EC" id="5.4.2.11"/>
    </reaction>
</comment>
<comment type="pathway">
    <text evidence="1">Carbohydrate degradation; glycolysis; pyruvate from D-glyceraldehyde 3-phosphate: step 3/5.</text>
</comment>
<comment type="subunit">
    <text evidence="1">Homodimer.</text>
</comment>
<comment type="similarity">
    <text evidence="1">Belongs to the phosphoglycerate mutase family. BPG-dependent PGAM subfamily.</text>
</comment>
<keyword id="KW-0312">Gluconeogenesis</keyword>
<keyword id="KW-0324">Glycolysis</keyword>
<keyword id="KW-0413">Isomerase</keyword>
<keyword id="KW-1185">Reference proteome</keyword>
<dbReference type="EC" id="5.4.2.11" evidence="1"/>
<dbReference type="EMBL" id="CP000115">
    <property type="protein sequence ID" value="ABA03470.1"/>
    <property type="molecule type" value="Genomic_DNA"/>
</dbReference>
<dbReference type="RefSeq" id="WP_011313538.1">
    <property type="nucleotide sequence ID" value="NC_007406.1"/>
</dbReference>
<dbReference type="SMR" id="Q3SW71"/>
<dbReference type="STRING" id="323098.Nwi_0202"/>
<dbReference type="KEGG" id="nwi:Nwi_0202"/>
<dbReference type="eggNOG" id="COG0588">
    <property type="taxonomic scope" value="Bacteria"/>
</dbReference>
<dbReference type="HOGENOM" id="CLU_033323_1_4_5"/>
<dbReference type="OrthoDB" id="9781415at2"/>
<dbReference type="UniPathway" id="UPA00109">
    <property type="reaction ID" value="UER00186"/>
</dbReference>
<dbReference type="Proteomes" id="UP000002531">
    <property type="component" value="Chromosome"/>
</dbReference>
<dbReference type="GO" id="GO:0004619">
    <property type="term" value="F:phosphoglycerate mutase activity"/>
    <property type="evidence" value="ECO:0007669"/>
    <property type="project" value="UniProtKB-EC"/>
</dbReference>
<dbReference type="GO" id="GO:0006094">
    <property type="term" value="P:gluconeogenesis"/>
    <property type="evidence" value="ECO:0007669"/>
    <property type="project" value="UniProtKB-UniRule"/>
</dbReference>
<dbReference type="GO" id="GO:0006096">
    <property type="term" value="P:glycolytic process"/>
    <property type="evidence" value="ECO:0007669"/>
    <property type="project" value="UniProtKB-UniRule"/>
</dbReference>
<dbReference type="CDD" id="cd07067">
    <property type="entry name" value="HP_PGM_like"/>
    <property type="match status" value="1"/>
</dbReference>
<dbReference type="Gene3D" id="3.40.50.1240">
    <property type="entry name" value="Phosphoglycerate mutase-like"/>
    <property type="match status" value="1"/>
</dbReference>
<dbReference type="HAMAP" id="MF_01039">
    <property type="entry name" value="PGAM_GpmA"/>
    <property type="match status" value="1"/>
</dbReference>
<dbReference type="InterPro" id="IPR013078">
    <property type="entry name" value="His_Pase_superF_clade-1"/>
</dbReference>
<dbReference type="InterPro" id="IPR029033">
    <property type="entry name" value="His_PPase_superfam"/>
</dbReference>
<dbReference type="InterPro" id="IPR001345">
    <property type="entry name" value="PG/BPGM_mutase_AS"/>
</dbReference>
<dbReference type="InterPro" id="IPR005952">
    <property type="entry name" value="Phosphogly_mut1"/>
</dbReference>
<dbReference type="NCBIfam" id="TIGR01258">
    <property type="entry name" value="pgm_1"/>
    <property type="match status" value="1"/>
</dbReference>
<dbReference type="NCBIfam" id="NF002339">
    <property type="entry name" value="PRK01295.1"/>
    <property type="match status" value="1"/>
</dbReference>
<dbReference type="PANTHER" id="PTHR11931">
    <property type="entry name" value="PHOSPHOGLYCERATE MUTASE"/>
    <property type="match status" value="1"/>
</dbReference>
<dbReference type="Pfam" id="PF00300">
    <property type="entry name" value="His_Phos_1"/>
    <property type="match status" value="1"/>
</dbReference>
<dbReference type="SMART" id="SM00855">
    <property type="entry name" value="PGAM"/>
    <property type="match status" value="1"/>
</dbReference>
<dbReference type="SUPFAM" id="SSF53254">
    <property type="entry name" value="Phosphoglycerate mutase-like"/>
    <property type="match status" value="1"/>
</dbReference>
<dbReference type="PROSITE" id="PS00175">
    <property type="entry name" value="PG_MUTASE"/>
    <property type="match status" value="1"/>
</dbReference>
<feature type="chain" id="PRO_0000229129" description="2,3-bisphosphoglycerate-dependent phosphoglycerate mutase">
    <location>
        <begin position="1"/>
        <end position="207"/>
    </location>
</feature>
<feature type="active site" description="Tele-phosphohistidine intermediate" evidence="1">
    <location>
        <position position="11"/>
    </location>
</feature>
<feature type="active site" description="Proton donor/acceptor" evidence="1">
    <location>
        <position position="89"/>
    </location>
</feature>
<feature type="binding site" evidence="1">
    <location>
        <begin position="10"/>
        <end position="17"/>
    </location>
    <ligand>
        <name>substrate</name>
    </ligand>
</feature>
<feature type="binding site" evidence="1">
    <location>
        <begin position="23"/>
        <end position="24"/>
    </location>
    <ligand>
        <name>substrate</name>
    </ligand>
</feature>
<feature type="binding site" evidence="1">
    <location>
        <position position="62"/>
    </location>
    <ligand>
        <name>substrate</name>
    </ligand>
</feature>
<feature type="binding site" evidence="1">
    <location>
        <begin position="89"/>
        <end position="92"/>
    </location>
    <ligand>
        <name>substrate</name>
    </ligand>
</feature>
<feature type="binding site" evidence="1">
    <location>
        <position position="100"/>
    </location>
    <ligand>
        <name>substrate</name>
    </ligand>
</feature>
<feature type="binding site" evidence="1">
    <location>
        <begin position="116"/>
        <end position="117"/>
    </location>
    <ligand>
        <name>substrate</name>
    </ligand>
</feature>
<feature type="binding site" evidence="1">
    <location>
        <begin position="160"/>
        <end position="161"/>
    </location>
    <ligand>
        <name>substrate</name>
    </ligand>
</feature>
<feature type="site" description="Transition state stabilizer" evidence="1">
    <location>
        <position position="159"/>
    </location>
</feature>
<sequence>MSERLLVLVRHGQSEWNLKNLFTGWKDPDLTELGAAEAKDAGRKLKAQGFVFDIAFTSTLIRAQHTLDLVLKELDQTGIPVRKDQALNERDYGDLSGLNKDEARKKWGDEQVLVWRRSYDVPPPGGESLKDTLARTLPYFVQEILPCVLRGECTLVAAHGNSLRALVMVLEKLSPEQILARELATGAPVIYRLNADATVASKLDLAA</sequence>
<accession>Q3SW71</accession>
<gene>
    <name evidence="1" type="primary">gpmA</name>
    <name type="ordered locus">Nwi_0202</name>
</gene>
<protein>
    <recommendedName>
        <fullName evidence="1">2,3-bisphosphoglycerate-dependent phosphoglycerate mutase</fullName>
        <shortName evidence="1">BPG-dependent PGAM</shortName>
        <shortName evidence="1">PGAM</shortName>
        <shortName evidence="1">Phosphoglyceromutase</shortName>
        <shortName evidence="1">dPGM</shortName>
        <ecNumber evidence="1">5.4.2.11</ecNumber>
    </recommendedName>
</protein>
<reference key="1">
    <citation type="journal article" date="2006" name="Appl. Environ. Microbiol.">
        <title>Genome sequence of the chemolithoautotrophic nitrite-oxidizing bacterium Nitrobacter winogradskyi Nb-255.</title>
        <authorList>
            <person name="Starkenburg S.R."/>
            <person name="Chain P.S.G."/>
            <person name="Sayavedra-Soto L.A."/>
            <person name="Hauser L."/>
            <person name="Land M.L."/>
            <person name="Larimer F.W."/>
            <person name="Malfatti S.A."/>
            <person name="Klotz M.G."/>
            <person name="Bottomley P.J."/>
            <person name="Arp D.J."/>
            <person name="Hickey W.J."/>
        </authorList>
    </citation>
    <scope>NUCLEOTIDE SEQUENCE [LARGE SCALE GENOMIC DNA]</scope>
    <source>
        <strain>ATCC 25391 / DSM 10237 / CIP 104748 / NCIMB 11846 / Nb-255</strain>
    </source>
</reference>